<comment type="catalytic activity">
    <reaction>
        <text>hydrogencarbonate + NH4(+) + ATP = carbamoyl phosphate + ADP + H2O + H(+)</text>
        <dbReference type="Rhea" id="RHEA:10152"/>
        <dbReference type="ChEBI" id="CHEBI:15377"/>
        <dbReference type="ChEBI" id="CHEBI:15378"/>
        <dbReference type="ChEBI" id="CHEBI:17544"/>
        <dbReference type="ChEBI" id="CHEBI:28938"/>
        <dbReference type="ChEBI" id="CHEBI:30616"/>
        <dbReference type="ChEBI" id="CHEBI:58228"/>
        <dbReference type="ChEBI" id="CHEBI:456216"/>
        <dbReference type="EC" id="2.7.2.2"/>
    </reaction>
</comment>
<comment type="pathway">
    <text>Metabolic intermediate metabolism; carbamoyl phosphate degradation; CO(2) and NH(3) from carbamoyl phosphate: step 1/1.</text>
</comment>
<comment type="subcellular location">
    <subcellularLocation>
        <location evidence="1">Cytoplasm</location>
    </subcellularLocation>
</comment>
<comment type="similarity">
    <text evidence="1">Belongs to the carbamate kinase family.</text>
</comment>
<protein>
    <recommendedName>
        <fullName>Carbamate kinase 1</fullName>
        <ecNumber>2.7.2.2</ecNumber>
    </recommendedName>
</protein>
<organism>
    <name type="scientific">Staphylococcus aureus (strain COL)</name>
    <dbReference type="NCBI Taxonomy" id="93062"/>
    <lineage>
        <taxon>Bacteria</taxon>
        <taxon>Bacillati</taxon>
        <taxon>Bacillota</taxon>
        <taxon>Bacilli</taxon>
        <taxon>Bacillales</taxon>
        <taxon>Staphylococcaceae</taxon>
        <taxon>Staphylococcus</taxon>
    </lineage>
</organism>
<feature type="chain" id="PRO_0000269234" description="Carbamate kinase 1">
    <location>
        <begin position="1"/>
        <end position="310"/>
    </location>
</feature>
<accession>Q5HGR2</accession>
<evidence type="ECO:0000305" key="1"/>
<gene>
    <name type="primary">arcC1</name>
    <name type="ordered locus">SACOL1182</name>
</gene>
<keyword id="KW-0056">Arginine metabolism</keyword>
<keyword id="KW-0067">ATP-binding</keyword>
<keyword id="KW-0963">Cytoplasm</keyword>
<keyword id="KW-0418">Kinase</keyword>
<keyword id="KW-0547">Nucleotide-binding</keyword>
<keyword id="KW-0808">Transferase</keyword>
<proteinExistence type="inferred from homology"/>
<sequence length="310" mass="33596">MAKIVVALGGNALGKSPQEQLELVKNTAKSLVGLITKGHEIVISHGNGPQVGSINLGLNYAAEHNQGPAFPFAECGAMSQAYIGYQLQESLQNELHSIGMDKQVVTLVTQVEVDENDPAFNNPSKPIGLFYNKEEAEQIQKEKGFIFVEDAGRGYRRVVPSPQPISIIELESIKTLIKNDTLVIAAGGGGIPVIREQHDGFKGIDAVIDKDKTSALLGANIQCDQLIILTAIDYVYINFNTENQQPLKTTNVDELKRYIDENQFAKGSMLPKIEAAISFIENNPKGSVLITSLNELDAALEGKVGTVIKK</sequence>
<name>ARCC1_STAAC</name>
<dbReference type="EC" id="2.7.2.2"/>
<dbReference type="EMBL" id="CP000046">
    <property type="protein sequence ID" value="AAW36561.1"/>
    <property type="molecule type" value="Genomic_DNA"/>
</dbReference>
<dbReference type="SMR" id="Q5HGR2"/>
<dbReference type="KEGG" id="sac:SACOL1182"/>
<dbReference type="HOGENOM" id="CLU_076278_0_0_9"/>
<dbReference type="UniPathway" id="UPA00996">
    <property type="reaction ID" value="UER00366"/>
</dbReference>
<dbReference type="Proteomes" id="UP000000530">
    <property type="component" value="Chromosome"/>
</dbReference>
<dbReference type="GO" id="GO:0005829">
    <property type="term" value="C:cytosol"/>
    <property type="evidence" value="ECO:0007669"/>
    <property type="project" value="TreeGrafter"/>
</dbReference>
<dbReference type="GO" id="GO:0005524">
    <property type="term" value="F:ATP binding"/>
    <property type="evidence" value="ECO:0007669"/>
    <property type="project" value="UniProtKB-KW"/>
</dbReference>
<dbReference type="GO" id="GO:0008804">
    <property type="term" value="F:carbamate kinase activity"/>
    <property type="evidence" value="ECO:0007669"/>
    <property type="project" value="UniProtKB-EC"/>
</dbReference>
<dbReference type="GO" id="GO:0019546">
    <property type="term" value="P:arginine deiminase pathway"/>
    <property type="evidence" value="ECO:0007669"/>
    <property type="project" value="TreeGrafter"/>
</dbReference>
<dbReference type="CDD" id="cd04235">
    <property type="entry name" value="AAK_CK"/>
    <property type="match status" value="1"/>
</dbReference>
<dbReference type="FunFam" id="3.40.1160.10:FF:000007">
    <property type="entry name" value="Carbamate kinase"/>
    <property type="match status" value="1"/>
</dbReference>
<dbReference type="Gene3D" id="3.40.1160.10">
    <property type="entry name" value="Acetylglutamate kinase-like"/>
    <property type="match status" value="1"/>
</dbReference>
<dbReference type="InterPro" id="IPR036393">
    <property type="entry name" value="AceGlu_kinase-like_sf"/>
</dbReference>
<dbReference type="InterPro" id="IPR001048">
    <property type="entry name" value="Asp/Glu/Uridylate_kinase"/>
</dbReference>
<dbReference type="InterPro" id="IPR003964">
    <property type="entry name" value="Carb_kinase"/>
</dbReference>
<dbReference type="NCBIfam" id="TIGR00746">
    <property type="entry name" value="arcC"/>
    <property type="match status" value="1"/>
</dbReference>
<dbReference type="NCBIfam" id="NF009007">
    <property type="entry name" value="PRK12352.1"/>
    <property type="match status" value="1"/>
</dbReference>
<dbReference type="PANTHER" id="PTHR30409">
    <property type="entry name" value="CARBAMATE KINASE"/>
    <property type="match status" value="1"/>
</dbReference>
<dbReference type="PANTHER" id="PTHR30409:SF1">
    <property type="entry name" value="CARBAMATE KINASE-RELATED"/>
    <property type="match status" value="1"/>
</dbReference>
<dbReference type="Pfam" id="PF00696">
    <property type="entry name" value="AA_kinase"/>
    <property type="match status" value="1"/>
</dbReference>
<dbReference type="PIRSF" id="PIRSF000723">
    <property type="entry name" value="Carbamate_kin"/>
    <property type="match status" value="1"/>
</dbReference>
<dbReference type="PRINTS" id="PR01469">
    <property type="entry name" value="CARBMTKINASE"/>
</dbReference>
<dbReference type="SUPFAM" id="SSF53633">
    <property type="entry name" value="Carbamate kinase-like"/>
    <property type="match status" value="1"/>
</dbReference>
<reference key="1">
    <citation type="journal article" date="2005" name="J. Bacteriol.">
        <title>Insights on evolution of virulence and resistance from the complete genome analysis of an early methicillin-resistant Staphylococcus aureus strain and a biofilm-producing methicillin-resistant Staphylococcus epidermidis strain.</title>
        <authorList>
            <person name="Gill S.R."/>
            <person name="Fouts D.E."/>
            <person name="Archer G.L."/>
            <person name="Mongodin E.F."/>
            <person name="DeBoy R.T."/>
            <person name="Ravel J."/>
            <person name="Paulsen I.T."/>
            <person name="Kolonay J.F."/>
            <person name="Brinkac L.M."/>
            <person name="Beanan M.J."/>
            <person name="Dodson R.J."/>
            <person name="Daugherty S.C."/>
            <person name="Madupu R."/>
            <person name="Angiuoli S.V."/>
            <person name="Durkin A.S."/>
            <person name="Haft D.H."/>
            <person name="Vamathevan J.J."/>
            <person name="Khouri H."/>
            <person name="Utterback T.R."/>
            <person name="Lee C."/>
            <person name="Dimitrov G."/>
            <person name="Jiang L."/>
            <person name="Qin H."/>
            <person name="Weidman J."/>
            <person name="Tran K."/>
            <person name="Kang K.H."/>
            <person name="Hance I.R."/>
            <person name="Nelson K.E."/>
            <person name="Fraser C.M."/>
        </authorList>
    </citation>
    <scope>NUCLEOTIDE SEQUENCE [LARGE SCALE GENOMIC DNA]</scope>
    <source>
        <strain>COL</strain>
    </source>
</reference>